<keyword id="KW-0067">ATP-binding</keyword>
<keyword id="KW-0547">Nucleotide-binding</keyword>
<keyword id="KW-0548">Nucleotidyltransferase</keyword>
<keyword id="KW-0808">Transferase</keyword>
<evidence type="ECO:0000255" key="1">
    <source>
        <dbReference type="HAMAP-Rule" id="MF_00064"/>
    </source>
</evidence>
<reference key="1">
    <citation type="journal article" date="2008" name="PLoS Genet.">
        <title>Complete genome sequence of the N2-fixing broad host range endophyte Klebsiella pneumoniae 342 and virulence predictions verified in mice.</title>
        <authorList>
            <person name="Fouts D.E."/>
            <person name="Tyler H.L."/>
            <person name="DeBoy R.T."/>
            <person name="Daugherty S."/>
            <person name="Ren Q."/>
            <person name="Badger J.H."/>
            <person name="Durkin A.S."/>
            <person name="Huot H."/>
            <person name="Shrivastava S."/>
            <person name="Kothari S."/>
            <person name="Dodson R.J."/>
            <person name="Mohamoud Y."/>
            <person name="Khouri H."/>
            <person name="Roesch L.F.W."/>
            <person name="Krogfelt K.A."/>
            <person name="Struve C."/>
            <person name="Triplett E.W."/>
            <person name="Methe B.A."/>
        </authorList>
    </citation>
    <scope>NUCLEOTIDE SEQUENCE [LARGE SCALE GENOMIC DNA]</scope>
    <source>
        <strain>342</strain>
    </source>
</reference>
<sequence length="302" mass="35214">MDQKRLTHLRQLEAESIHIIREVAAEFSNPVMMYSIGKDSSVMLHLARKAFYPGTLPFPLLHVDTGWKFREMYEFRDRTAKAYGCELLVHKNPEGVAMGINPFVHGSAKHTDIMKTEGLKQALNKYGFDAAFGGARRDEEKSRAKERIYSFRDRFHRWDPKNQRPELWHNYNGQINKGESIRVFPLSNWTELDIWQYIYLENIEIVPLYLAAERPVLERDGMLMMIDDDRIDLQPGEVIEKRMVRFRTLGCWPLTGAVESEAQTLPEIIEEMLVSTTSERQGRVIDRDQAGSMELKKRQGYF</sequence>
<feature type="chain" id="PRO_1000092207" description="Sulfate adenylyltransferase subunit 2">
    <location>
        <begin position="1"/>
        <end position="302"/>
    </location>
</feature>
<protein>
    <recommendedName>
        <fullName evidence="1">Sulfate adenylyltransferase subunit 2</fullName>
        <ecNumber evidence="1">2.7.7.4</ecNumber>
    </recommendedName>
    <alternativeName>
        <fullName evidence="1">ATP-sulfurylase small subunit</fullName>
    </alternativeName>
    <alternativeName>
        <fullName evidence="1">Sulfate adenylate transferase</fullName>
        <shortName evidence="1">SAT</shortName>
    </alternativeName>
</protein>
<gene>
    <name evidence="1" type="primary">cysD</name>
    <name type="ordered locus">KPK_1009</name>
</gene>
<dbReference type="EC" id="2.7.7.4" evidence="1"/>
<dbReference type="EMBL" id="CP000964">
    <property type="protein sequence ID" value="ACI11521.1"/>
    <property type="molecule type" value="Genomic_DNA"/>
</dbReference>
<dbReference type="SMR" id="B5XV29"/>
<dbReference type="KEGG" id="kpe:KPK_1009"/>
<dbReference type="HOGENOM" id="CLU_043026_0_0_6"/>
<dbReference type="UniPathway" id="UPA00140">
    <property type="reaction ID" value="UER00204"/>
</dbReference>
<dbReference type="Proteomes" id="UP000001734">
    <property type="component" value="Chromosome"/>
</dbReference>
<dbReference type="GO" id="GO:0005524">
    <property type="term" value="F:ATP binding"/>
    <property type="evidence" value="ECO:0007669"/>
    <property type="project" value="UniProtKB-KW"/>
</dbReference>
<dbReference type="GO" id="GO:0004781">
    <property type="term" value="F:sulfate adenylyltransferase (ATP) activity"/>
    <property type="evidence" value="ECO:0007669"/>
    <property type="project" value="UniProtKB-UniRule"/>
</dbReference>
<dbReference type="GO" id="GO:0070814">
    <property type="term" value="P:hydrogen sulfide biosynthetic process"/>
    <property type="evidence" value="ECO:0007669"/>
    <property type="project" value="UniProtKB-UniRule"/>
</dbReference>
<dbReference type="GO" id="GO:0000103">
    <property type="term" value="P:sulfate assimilation"/>
    <property type="evidence" value="ECO:0007669"/>
    <property type="project" value="UniProtKB-UniRule"/>
</dbReference>
<dbReference type="CDD" id="cd23946">
    <property type="entry name" value="Sulfate_adenylyltransferase_2"/>
    <property type="match status" value="1"/>
</dbReference>
<dbReference type="FunFam" id="3.40.50.620:FF:000002">
    <property type="entry name" value="Sulfate adenylyltransferase subunit 2"/>
    <property type="match status" value="1"/>
</dbReference>
<dbReference type="Gene3D" id="3.40.50.620">
    <property type="entry name" value="HUPs"/>
    <property type="match status" value="1"/>
</dbReference>
<dbReference type="HAMAP" id="MF_00064">
    <property type="entry name" value="Sulf_adenylyltr_sub2"/>
    <property type="match status" value="1"/>
</dbReference>
<dbReference type="InterPro" id="IPR002500">
    <property type="entry name" value="PAPS_reduct_dom"/>
</dbReference>
<dbReference type="InterPro" id="IPR014729">
    <property type="entry name" value="Rossmann-like_a/b/a_fold"/>
</dbReference>
<dbReference type="InterPro" id="IPR011784">
    <property type="entry name" value="SO4_adenylTrfase_ssu"/>
</dbReference>
<dbReference type="InterPro" id="IPR050128">
    <property type="entry name" value="Sulfate_adenylyltrnsfr_sub2"/>
</dbReference>
<dbReference type="NCBIfam" id="TIGR02039">
    <property type="entry name" value="CysD"/>
    <property type="match status" value="1"/>
</dbReference>
<dbReference type="NCBIfam" id="NF003587">
    <property type="entry name" value="PRK05253.1"/>
    <property type="match status" value="1"/>
</dbReference>
<dbReference type="NCBIfam" id="NF009214">
    <property type="entry name" value="PRK12563.1"/>
    <property type="match status" value="1"/>
</dbReference>
<dbReference type="PANTHER" id="PTHR43196">
    <property type="entry name" value="SULFATE ADENYLYLTRANSFERASE SUBUNIT 2"/>
    <property type="match status" value="1"/>
</dbReference>
<dbReference type="PANTHER" id="PTHR43196:SF1">
    <property type="entry name" value="SULFATE ADENYLYLTRANSFERASE SUBUNIT 2"/>
    <property type="match status" value="1"/>
</dbReference>
<dbReference type="Pfam" id="PF01507">
    <property type="entry name" value="PAPS_reduct"/>
    <property type="match status" value="1"/>
</dbReference>
<dbReference type="PIRSF" id="PIRSF002936">
    <property type="entry name" value="CysDAde_trans"/>
    <property type="match status" value="1"/>
</dbReference>
<dbReference type="SUPFAM" id="SSF52402">
    <property type="entry name" value="Adenine nucleotide alpha hydrolases-like"/>
    <property type="match status" value="1"/>
</dbReference>
<accession>B5XV29</accession>
<proteinExistence type="inferred from homology"/>
<organism>
    <name type="scientific">Klebsiella pneumoniae (strain 342)</name>
    <dbReference type="NCBI Taxonomy" id="507522"/>
    <lineage>
        <taxon>Bacteria</taxon>
        <taxon>Pseudomonadati</taxon>
        <taxon>Pseudomonadota</taxon>
        <taxon>Gammaproteobacteria</taxon>
        <taxon>Enterobacterales</taxon>
        <taxon>Enterobacteriaceae</taxon>
        <taxon>Klebsiella/Raoultella group</taxon>
        <taxon>Klebsiella</taxon>
        <taxon>Klebsiella pneumoniae complex</taxon>
    </lineage>
</organism>
<name>CYSD_KLEP3</name>
<comment type="function">
    <text evidence="1">With CysN forms the ATP sulfurylase (ATPS) that catalyzes the adenylation of sulfate producing adenosine 5'-phosphosulfate (APS) and diphosphate, the first enzymatic step in sulfur assimilation pathway. APS synthesis involves the formation of a high-energy phosphoric-sulfuric acid anhydride bond driven by GTP hydrolysis by CysN coupled to ATP hydrolysis by CysD.</text>
</comment>
<comment type="catalytic activity">
    <reaction evidence="1">
        <text>sulfate + ATP + H(+) = adenosine 5'-phosphosulfate + diphosphate</text>
        <dbReference type="Rhea" id="RHEA:18133"/>
        <dbReference type="ChEBI" id="CHEBI:15378"/>
        <dbReference type="ChEBI" id="CHEBI:16189"/>
        <dbReference type="ChEBI" id="CHEBI:30616"/>
        <dbReference type="ChEBI" id="CHEBI:33019"/>
        <dbReference type="ChEBI" id="CHEBI:58243"/>
        <dbReference type="EC" id="2.7.7.4"/>
    </reaction>
</comment>
<comment type="pathway">
    <text evidence="1">Sulfur metabolism; hydrogen sulfide biosynthesis; sulfite from sulfate: step 1/3.</text>
</comment>
<comment type="subunit">
    <text evidence="1">Heterodimer composed of CysD, the smaller subunit, and CysN.</text>
</comment>
<comment type="similarity">
    <text evidence="1">Belongs to the PAPS reductase family. CysD subfamily.</text>
</comment>